<gene>
    <name type="primary">GLO4</name>
    <name type="ordered locus">At3g14130</name>
    <name type="ORF">MAG2.2</name>
</gene>
<sequence>MDQIVNVDEFQELAKQALPKMYYDFYNGGAEDQHTLNENVQAFRRIMFRPRVLVDVSNIDMSTSMLGYPISAPIMIAPTAMHKLAHPKGEIATAKAAAACNTIMIVSFMSTCTIEEVASSCNAVRFLQIYVYKRRDVTAQIVKRAEKAGFKAIVLTVDVPRLGRREADIKNKMISPQLKNFEGLVSTEVRPNEGSGVEAFASSAFDASLSWKDIEWLRSITKLPILVKGLLTREDALKAVEAGVDGIVVSNHGARQLDYSPATITVLEEVVHAVKGRIPVLLDGGVRRGTDVFKALALGAQAVLIGRPIVYGLAAKGEDGVKKVIDMLKNEFEITMALSGCPTIDDVTRNHVRTENERIKSML</sequence>
<protein>
    <recommendedName>
        <fullName>Peroxisomal (S)-2-hydroxyacid oxidase GLO4</fullName>
        <ecNumber evidence="5">1.1.3.15</ecNumber>
    </recommendedName>
    <alternativeName>
        <fullName>Glycolate oxidase 4</fullName>
        <shortName>AtGLO4</shortName>
        <shortName>GOX 4</shortName>
    </alternativeName>
    <alternativeName>
        <fullName evidence="6">lHAOX1</fullName>
    </alternativeName>
</protein>
<organism>
    <name type="scientific">Arabidopsis thaliana</name>
    <name type="common">Mouse-ear cress</name>
    <dbReference type="NCBI Taxonomy" id="3702"/>
    <lineage>
        <taxon>Eukaryota</taxon>
        <taxon>Viridiplantae</taxon>
        <taxon>Streptophyta</taxon>
        <taxon>Embryophyta</taxon>
        <taxon>Tracheophyta</taxon>
        <taxon>Spermatophyta</taxon>
        <taxon>Magnoliopsida</taxon>
        <taxon>eudicotyledons</taxon>
        <taxon>Gunneridae</taxon>
        <taxon>Pentapetalae</taxon>
        <taxon>rosids</taxon>
        <taxon>malvids</taxon>
        <taxon>Brassicales</taxon>
        <taxon>Brassicaceae</taxon>
        <taxon>Camelineae</taxon>
        <taxon>Arabidopsis</taxon>
    </lineage>
</organism>
<reference key="1">
    <citation type="journal article" date="2000" name="DNA Res.">
        <title>Structural analysis of Arabidopsis thaliana chromosome 3. II. Sequence features of the 4,251,695 bp regions covered by 90 P1, TAC and BAC clones.</title>
        <authorList>
            <person name="Kaneko T."/>
            <person name="Katoh T."/>
            <person name="Sato S."/>
            <person name="Nakamura Y."/>
            <person name="Asamizu E."/>
            <person name="Tabata S."/>
        </authorList>
    </citation>
    <scope>NUCLEOTIDE SEQUENCE [LARGE SCALE GENOMIC DNA]</scope>
    <source>
        <strain>cv. Columbia</strain>
    </source>
</reference>
<reference key="2">
    <citation type="journal article" date="2017" name="Plant J.">
        <title>Araport11: a complete reannotation of the Arabidopsis thaliana reference genome.</title>
        <authorList>
            <person name="Cheng C.Y."/>
            <person name="Krishnakumar V."/>
            <person name="Chan A.P."/>
            <person name="Thibaud-Nissen F."/>
            <person name="Schobel S."/>
            <person name="Town C.D."/>
        </authorList>
    </citation>
    <scope>GENOME REANNOTATION</scope>
    <source>
        <strain>cv. Columbia</strain>
    </source>
</reference>
<reference key="3">
    <citation type="journal article" date="2003" name="Science">
        <title>Empirical analysis of transcriptional activity in the Arabidopsis genome.</title>
        <authorList>
            <person name="Yamada K."/>
            <person name="Lim J."/>
            <person name="Dale J.M."/>
            <person name="Chen H."/>
            <person name="Shinn P."/>
            <person name="Palm C.J."/>
            <person name="Southwick A.M."/>
            <person name="Wu H.C."/>
            <person name="Kim C.J."/>
            <person name="Nguyen M."/>
            <person name="Pham P.K."/>
            <person name="Cheuk R.F."/>
            <person name="Karlin-Newmann G."/>
            <person name="Liu S.X."/>
            <person name="Lam B."/>
            <person name="Sakano H."/>
            <person name="Wu T."/>
            <person name="Yu G."/>
            <person name="Miranda M."/>
            <person name="Quach H.L."/>
            <person name="Tripp M."/>
            <person name="Chang C.H."/>
            <person name="Lee J.M."/>
            <person name="Toriumi M.J."/>
            <person name="Chan M.M."/>
            <person name="Tang C.C."/>
            <person name="Onodera C.S."/>
            <person name="Deng J.M."/>
            <person name="Akiyama K."/>
            <person name="Ansari Y."/>
            <person name="Arakawa T."/>
            <person name="Banh J."/>
            <person name="Banno F."/>
            <person name="Bowser L."/>
            <person name="Brooks S.Y."/>
            <person name="Carninci P."/>
            <person name="Chao Q."/>
            <person name="Choy N."/>
            <person name="Enju A."/>
            <person name="Goldsmith A.D."/>
            <person name="Gurjal M."/>
            <person name="Hansen N.F."/>
            <person name="Hayashizaki Y."/>
            <person name="Johnson-Hopson C."/>
            <person name="Hsuan V.W."/>
            <person name="Iida K."/>
            <person name="Karnes M."/>
            <person name="Khan S."/>
            <person name="Koesema E."/>
            <person name="Ishida J."/>
            <person name="Jiang P.X."/>
            <person name="Jones T."/>
            <person name="Kawai J."/>
            <person name="Kamiya A."/>
            <person name="Meyers C."/>
            <person name="Nakajima M."/>
            <person name="Narusaka M."/>
            <person name="Seki M."/>
            <person name="Sakurai T."/>
            <person name="Satou M."/>
            <person name="Tamse R."/>
            <person name="Vaysberg M."/>
            <person name="Wallender E.K."/>
            <person name="Wong C."/>
            <person name="Yamamura Y."/>
            <person name="Yuan S."/>
            <person name="Shinozaki K."/>
            <person name="Davis R.W."/>
            <person name="Theologis A."/>
            <person name="Ecker J.R."/>
        </authorList>
    </citation>
    <scope>NUCLEOTIDE SEQUENCE [LARGE SCALE MRNA]</scope>
    <source>
        <strain>cv. Columbia</strain>
    </source>
</reference>
<reference key="4">
    <citation type="submission" date="2002-03" db="EMBL/GenBank/DDBJ databases">
        <title>Full-length cDNA from Arabidopsis thaliana.</title>
        <authorList>
            <person name="Brover V.V."/>
            <person name="Troukhan M.E."/>
            <person name="Alexandrov N.A."/>
            <person name="Lu Y.-P."/>
            <person name="Flavell R.B."/>
            <person name="Feldmann K.A."/>
        </authorList>
    </citation>
    <scope>NUCLEOTIDE SEQUENCE [LARGE SCALE MRNA]</scope>
</reference>
<reference key="5">
    <citation type="journal article" date="2009" name="J. Exp. Bot.">
        <title>Inducible antisense suppression of glycolate oxidase reveals its strong regulation over photosynthesis in rice.</title>
        <authorList>
            <person name="Xu H.-W."/>
            <person name="Zhang J."/>
            <person name="Zeng J."/>
            <person name="Jiang L."/>
            <person name="Liu E."/>
            <person name="Peng C."/>
            <person name="He Z.-H."/>
            <person name="Peng X.-X."/>
        </authorList>
    </citation>
    <scope>GENE FAMILY</scope>
    <scope>NOMENCLATURE</scope>
</reference>
<reference key="6">
    <citation type="journal article" date="2014" name="Mol. Biol. Evol.">
        <title>Plant and animal glycolate oxidases have a common eukaryotic ancestor and convergently duplicated to evolve long-chain 2-hydroxy acid oxidases.</title>
        <authorList>
            <person name="Esser C."/>
            <person name="Kuhn A."/>
            <person name="Groth G."/>
            <person name="Lercher M.J."/>
            <person name="Maurino V.G."/>
        </authorList>
    </citation>
    <scope>FUNCTION</scope>
    <scope>CATALYTIC ACTIVITY</scope>
    <scope>SUBSTRATE SPECIFICITY</scope>
    <scope>PATHWAY</scope>
</reference>
<feature type="chain" id="PRO_0000403407" description="Peroxisomal (S)-2-hydroxyacid oxidase GLO4">
    <location>
        <begin position="1"/>
        <end position="363"/>
    </location>
</feature>
<feature type="domain" description="FMN hydroxy acid dehydrogenase" evidence="4">
    <location>
        <begin position="1"/>
        <end position="357"/>
    </location>
</feature>
<feature type="short sequence motif" description="Microbody targeting signal" evidence="3">
    <location>
        <begin position="361"/>
        <end position="363"/>
    </location>
</feature>
<feature type="active site" description="Proton acceptor" evidence="2">
    <location>
        <position position="252"/>
    </location>
</feature>
<feature type="binding site" evidence="2">
    <location>
        <begin position="78"/>
        <end position="80"/>
    </location>
    <ligand>
        <name>FMN</name>
        <dbReference type="ChEBI" id="CHEBI:58210"/>
    </ligand>
</feature>
<feature type="binding site" evidence="2">
    <location>
        <position position="107"/>
    </location>
    <ligand>
        <name>FMN</name>
        <dbReference type="ChEBI" id="CHEBI:58210"/>
    </ligand>
</feature>
<feature type="binding site" evidence="2">
    <location>
        <begin position="128"/>
        <end position="130"/>
    </location>
    <ligand>
        <name>FMN</name>
        <dbReference type="ChEBI" id="CHEBI:58210"/>
    </ligand>
</feature>
<feature type="binding site" evidence="4">
    <location>
        <position position="130"/>
    </location>
    <ligand>
        <name>a 2-oxocarboxylate</name>
        <dbReference type="ChEBI" id="CHEBI:35179"/>
    </ligand>
</feature>
<feature type="binding site" evidence="2">
    <location>
        <position position="156"/>
    </location>
    <ligand>
        <name>FMN</name>
        <dbReference type="ChEBI" id="CHEBI:58210"/>
    </ligand>
</feature>
<feature type="binding site" evidence="4">
    <location>
        <position position="165"/>
    </location>
    <ligand>
        <name>a 2-oxocarboxylate</name>
        <dbReference type="ChEBI" id="CHEBI:35179"/>
    </ligand>
</feature>
<feature type="binding site" evidence="2">
    <location>
        <position position="228"/>
    </location>
    <ligand>
        <name>FMN</name>
        <dbReference type="ChEBI" id="CHEBI:58210"/>
    </ligand>
</feature>
<feature type="binding site" evidence="2">
    <location>
        <position position="250"/>
    </location>
    <ligand>
        <name>FMN</name>
        <dbReference type="ChEBI" id="CHEBI:58210"/>
    </ligand>
</feature>
<feature type="binding site" evidence="4">
    <location>
        <position position="255"/>
    </location>
    <ligand>
        <name>a 2-oxocarboxylate</name>
        <dbReference type="ChEBI" id="CHEBI:35179"/>
    </ligand>
</feature>
<feature type="binding site" evidence="2">
    <location>
        <begin position="283"/>
        <end position="287"/>
    </location>
    <ligand>
        <name>FMN</name>
        <dbReference type="ChEBI" id="CHEBI:58210"/>
    </ligand>
</feature>
<feature type="binding site" evidence="2">
    <location>
        <begin position="306"/>
        <end position="307"/>
    </location>
    <ligand>
        <name>FMN</name>
        <dbReference type="ChEBI" id="CHEBI:58210"/>
    </ligand>
</feature>
<feature type="sequence conflict" description="In Ref. 4; AAM61594." evidence="7" ref="4">
    <original>M</original>
    <variation>I</variation>
    <location>
        <position position="65"/>
    </location>
</feature>
<feature type="sequence conflict" description="In Ref. 4; AAM61594." evidence="7" ref="4">
    <original>S</original>
    <variation>P</variation>
    <location>
        <position position="107"/>
    </location>
</feature>
<feature type="sequence conflict" description="In Ref. 4; AAM61594." evidence="7" ref="4">
    <original>A</original>
    <variation>V</variation>
    <location>
        <position position="273"/>
    </location>
</feature>
<accession>Q9LJH5</accession>
<accession>Q8LF60</accession>
<comment type="function">
    <text evidence="5">Oxidase that catalyzes the oxidation of a broad range of 2-hydroxyacids to the corresponding 2-oxoacids, with a reduction of O2 to H2O2. Displays the highest activity with the long-chain fatty acid 2-hydroxydodecanoate and has intermediate activity with 2-hydroxyhexanoate, 2-hydroxyoctanote, and the short-chain hydroxyacid (S)-lactate (L-lactate). With much lower activity, it can also use glycolate, leucic acid, valic acid, and isoleucic acid as substrates in vitro. Cannot use 2-hydroxyhexadecanoate or D-lactate as substrates. May be involved in a general medium- and long-chain fatty acid catabolic pathway such as alpha-oxidation.</text>
</comment>
<comment type="catalytic activity">
    <reaction evidence="5">
        <text>a (2S)-2-hydroxycarboxylate + O2 = a 2-oxocarboxylate + H2O2</text>
        <dbReference type="Rhea" id="RHEA:16789"/>
        <dbReference type="ChEBI" id="CHEBI:15379"/>
        <dbReference type="ChEBI" id="CHEBI:16240"/>
        <dbReference type="ChEBI" id="CHEBI:35179"/>
        <dbReference type="ChEBI" id="CHEBI:58123"/>
        <dbReference type="EC" id="1.1.3.15"/>
    </reaction>
    <physiologicalReaction direction="left-to-right" evidence="8">
        <dbReference type="Rhea" id="RHEA:16790"/>
    </physiologicalReaction>
</comment>
<comment type="catalytic activity">
    <reaction evidence="5">
        <text>2-hydroxydodecanoate + O2 = 2-oxododecanoate + H2O2</text>
        <dbReference type="Rhea" id="RHEA:69376"/>
        <dbReference type="ChEBI" id="CHEBI:15379"/>
        <dbReference type="ChEBI" id="CHEBI:16240"/>
        <dbReference type="ChEBI" id="CHEBI:141772"/>
        <dbReference type="ChEBI" id="CHEBI:142579"/>
    </reaction>
    <physiologicalReaction direction="left-to-right" evidence="8">
        <dbReference type="Rhea" id="RHEA:69377"/>
    </physiologicalReaction>
</comment>
<comment type="catalytic activity">
    <reaction evidence="5">
        <text>2-hydroxyhexanoate + O2 = 2-oxohexanoate + H2O2</text>
        <dbReference type="Rhea" id="RHEA:69372"/>
        <dbReference type="ChEBI" id="CHEBI:15379"/>
        <dbReference type="ChEBI" id="CHEBI:16240"/>
        <dbReference type="ChEBI" id="CHEBI:35177"/>
        <dbReference type="ChEBI" id="CHEBI:133738"/>
    </reaction>
    <physiologicalReaction direction="left-to-right" evidence="8">
        <dbReference type="Rhea" id="RHEA:69373"/>
    </physiologicalReaction>
</comment>
<comment type="catalytic activity">
    <reaction evidence="5">
        <text>2-hydroxyoctanoate + O2 = 2-oxooctanoate + H2O2</text>
        <dbReference type="Rhea" id="RHEA:67940"/>
        <dbReference type="ChEBI" id="CHEBI:15379"/>
        <dbReference type="ChEBI" id="CHEBI:16240"/>
        <dbReference type="ChEBI" id="CHEBI:133514"/>
        <dbReference type="ChEBI" id="CHEBI:176689"/>
    </reaction>
    <physiologicalReaction direction="left-to-right" evidence="8">
        <dbReference type="Rhea" id="RHEA:67941"/>
    </physiologicalReaction>
</comment>
<comment type="catalytic activity">
    <reaction evidence="5">
        <text>(S)-lactate + O2 = pyruvate + H2O2</text>
        <dbReference type="Rhea" id="RHEA:55868"/>
        <dbReference type="ChEBI" id="CHEBI:15361"/>
        <dbReference type="ChEBI" id="CHEBI:15379"/>
        <dbReference type="ChEBI" id="CHEBI:16240"/>
        <dbReference type="ChEBI" id="CHEBI:16651"/>
    </reaction>
    <physiologicalReaction direction="left-to-right" evidence="8">
        <dbReference type="Rhea" id="RHEA:55869"/>
    </physiologicalReaction>
</comment>
<comment type="cofactor">
    <cofactor evidence="2">
        <name>FMN</name>
        <dbReference type="ChEBI" id="CHEBI:58210"/>
    </cofactor>
</comment>
<comment type="pathway">
    <text evidence="8">Lipid metabolism; fatty acid metabolism.</text>
</comment>
<comment type="subunit">
    <text evidence="2">Homotetramer.</text>
</comment>
<comment type="subcellular location">
    <subcellularLocation>
        <location evidence="1">Peroxisome</location>
    </subcellularLocation>
</comment>
<comment type="similarity">
    <text evidence="4">Belongs to the FMN-dependent alpha-hydroxy acid dehydrogenase family.</text>
</comment>
<name>HAOX1_ARATH</name>
<keyword id="KW-0276">Fatty acid metabolism</keyword>
<keyword id="KW-0285">Flavoprotein</keyword>
<keyword id="KW-0288">FMN</keyword>
<keyword id="KW-0443">Lipid metabolism</keyword>
<keyword id="KW-0560">Oxidoreductase</keyword>
<keyword id="KW-0576">Peroxisome</keyword>
<keyword id="KW-1185">Reference proteome</keyword>
<evidence type="ECO:0000250" key="1"/>
<evidence type="ECO:0000250" key="2">
    <source>
        <dbReference type="UniProtKB" id="P05414"/>
    </source>
</evidence>
<evidence type="ECO:0000255" key="3"/>
<evidence type="ECO:0000255" key="4">
    <source>
        <dbReference type="PROSITE-ProRule" id="PRU00683"/>
    </source>
</evidence>
<evidence type="ECO:0000269" key="5">
    <source>
    </source>
</evidence>
<evidence type="ECO:0000303" key="6">
    <source>
    </source>
</evidence>
<evidence type="ECO:0000305" key="7"/>
<evidence type="ECO:0000305" key="8">
    <source>
    </source>
</evidence>
<proteinExistence type="evidence at protein level"/>
<dbReference type="EC" id="1.1.3.15" evidence="5"/>
<dbReference type="EMBL" id="AP000600">
    <property type="protein sequence ID" value="BAB02977.1"/>
    <property type="molecule type" value="Genomic_DNA"/>
</dbReference>
<dbReference type="EMBL" id="CP002686">
    <property type="protein sequence ID" value="AEE75475.1"/>
    <property type="molecule type" value="Genomic_DNA"/>
</dbReference>
<dbReference type="EMBL" id="CP002686">
    <property type="protein sequence ID" value="ANM65219.1"/>
    <property type="molecule type" value="Genomic_DNA"/>
</dbReference>
<dbReference type="EMBL" id="BT002739">
    <property type="protein sequence ID" value="AAO22568.1"/>
    <property type="molecule type" value="mRNA"/>
</dbReference>
<dbReference type="EMBL" id="AY085037">
    <property type="protein sequence ID" value="AAM61594.1"/>
    <property type="molecule type" value="mRNA"/>
</dbReference>
<dbReference type="SMR" id="Q9LJH5"/>
<dbReference type="FunCoup" id="Q9LJH5">
    <property type="interactions" value="1585"/>
</dbReference>
<dbReference type="STRING" id="3702.Q9LJH5"/>
<dbReference type="PaxDb" id="3702-AT3G14130.1"/>
<dbReference type="EnsemblPlants" id="AT3G14130.1">
    <property type="protein sequence ID" value="AT3G14130.1"/>
    <property type="gene ID" value="AT3G14130"/>
</dbReference>
<dbReference type="EnsemblPlants" id="AT3G14130.3">
    <property type="protein sequence ID" value="AT3G14130.3"/>
    <property type="gene ID" value="AT3G14130"/>
</dbReference>
<dbReference type="Gramene" id="AT3G14130.1">
    <property type="protein sequence ID" value="AT3G14130.1"/>
    <property type="gene ID" value="AT3G14130"/>
</dbReference>
<dbReference type="Gramene" id="AT3G14130.3">
    <property type="protein sequence ID" value="AT3G14130.3"/>
    <property type="gene ID" value="AT3G14130"/>
</dbReference>
<dbReference type="KEGG" id="ath:AT3G14130"/>
<dbReference type="Araport" id="AT3G14130"/>
<dbReference type="TAIR" id="AT3G14130">
    <property type="gene designation" value="HAOX1"/>
</dbReference>
<dbReference type="eggNOG" id="KOG0538">
    <property type="taxonomic scope" value="Eukaryota"/>
</dbReference>
<dbReference type="HOGENOM" id="CLU_020639_6_1_1"/>
<dbReference type="InParanoid" id="Q9LJH5"/>
<dbReference type="OMA" id="IEMNMVF"/>
<dbReference type="PhylomeDB" id="Q9LJH5"/>
<dbReference type="BioCyc" id="ARA:AT3G14130-MONOMER"/>
<dbReference type="BRENDA" id="1.1.3.15">
    <property type="organism ID" value="399"/>
</dbReference>
<dbReference type="UniPathway" id="UPA00199"/>
<dbReference type="PRO" id="PR:Q9LJH5"/>
<dbReference type="Proteomes" id="UP000006548">
    <property type="component" value="Chromosome 3"/>
</dbReference>
<dbReference type="ExpressionAtlas" id="Q9LJH5">
    <property type="expression patterns" value="baseline and differential"/>
</dbReference>
<dbReference type="GO" id="GO:0005777">
    <property type="term" value="C:peroxisome"/>
    <property type="evidence" value="ECO:0000314"/>
    <property type="project" value="TAIR"/>
</dbReference>
<dbReference type="GO" id="GO:0003973">
    <property type="term" value="F:(S)-2-hydroxy-acid oxidase activity"/>
    <property type="evidence" value="ECO:0007669"/>
    <property type="project" value="UniProtKB-EC"/>
</dbReference>
<dbReference type="GO" id="GO:0010181">
    <property type="term" value="F:FMN binding"/>
    <property type="evidence" value="ECO:0007669"/>
    <property type="project" value="InterPro"/>
</dbReference>
<dbReference type="GO" id="GO:0042742">
    <property type="term" value="P:defense response to bacterium"/>
    <property type="evidence" value="ECO:0000315"/>
    <property type="project" value="TAIR"/>
</dbReference>
<dbReference type="GO" id="GO:0006631">
    <property type="term" value="P:fatty acid metabolic process"/>
    <property type="evidence" value="ECO:0007669"/>
    <property type="project" value="UniProtKB-UniPathway"/>
</dbReference>
<dbReference type="GO" id="GO:0050665">
    <property type="term" value="P:hydrogen peroxide biosynthetic process"/>
    <property type="evidence" value="ECO:0000315"/>
    <property type="project" value="TAIR"/>
</dbReference>
<dbReference type="CDD" id="cd02809">
    <property type="entry name" value="alpha_hydroxyacid_oxid_FMN"/>
    <property type="match status" value="1"/>
</dbReference>
<dbReference type="FunFam" id="3.20.20.70:FF:000204">
    <property type="entry name" value="Peroxisomal (S)-2-hydroxy-acid oxidase GLO4"/>
    <property type="match status" value="1"/>
</dbReference>
<dbReference type="Gene3D" id="3.20.20.70">
    <property type="entry name" value="Aldolase class I"/>
    <property type="match status" value="1"/>
</dbReference>
<dbReference type="InterPro" id="IPR013785">
    <property type="entry name" value="Aldolase_TIM"/>
</dbReference>
<dbReference type="InterPro" id="IPR012133">
    <property type="entry name" value="Alpha-hydoxy_acid_DH_FMN"/>
</dbReference>
<dbReference type="InterPro" id="IPR000262">
    <property type="entry name" value="FMN-dep_DH"/>
</dbReference>
<dbReference type="InterPro" id="IPR037396">
    <property type="entry name" value="FMN_HAD"/>
</dbReference>
<dbReference type="InterPro" id="IPR008259">
    <property type="entry name" value="FMN_hydac_DH_AS"/>
</dbReference>
<dbReference type="PANTHER" id="PTHR10578:SF132">
    <property type="entry name" value="PEROXISOMAL (S)-2-HYDROXYACID OXIDASE GLO4"/>
    <property type="match status" value="1"/>
</dbReference>
<dbReference type="PANTHER" id="PTHR10578">
    <property type="entry name" value="S -2-HYDROXY-ACID OXIDASE-RELATED"/>
    <property type="match status" value="1"/>
</dbReference>
<dbReference type="Pfam" id="PF01070">
    <property type="entry name" value="FMN_dh"/>
    <property type="match status" value="1"/>
</dbReference>
<dbReference type="PIRSF" id="PIRSF000138">
    <property type="entry name" value="Al-hdrx_acd_dh"/>
    <property type="match status" value="1"/>
</dbReference>
<dbReference type="SUPFAM" id="SSF51395">
    <property type="entry name" value="FMN-linked oxidoreductases"/>
    <property type="match status" value="1"/>
</dbReference>
<dbReference type="PROSITE" id="PS00557">
    <property type="entry name" value="FMN_HYDROXY_ACID_DH_1"/>
    <property type="match status" value="1"/>
</dbReference>
<dbReference type="PROSITE" id="PS51349">
    <property type="entry name" value="FMN_HYDROXY_ACID_DH_2"/>
    <property type="match status" value="1"/>
</dbReference>